<accession>B7MDN8</accession>
<organism>
    <name type="scientific">Escherichia coli O45:K1 (strain S88 / ExPEC)</name>
    <dbReference type="NCBI Taxonomy" id="585035"/>
    <lineage>
        <taxon>Bacteria</taxon>
        <taxon>Pseudomonadati</taxon>
        <taxon>Pseudomonadota</taxon>
        <taxon>Gammaproteobacteria</taxon>
        <taxon>Enterobacterales</taxon>
        <taxon>Enterobacteriaceae</taxon>
        <taxon>Escherichia</taxon>
    </lineage>
</organism>
<proteinExistence type="inferred from homology"/>
<dbReference type="EC" id="3.1.1.85" evidence="2"/>
<dbReference type="EMBL" id="CU928161">
    <property type="protein sequence ID" value="CAR05013.1"/>
    <property type="molecule type" value="Genomic_DNA"/>
</dbReference>
<dbReference type="RefSeq" id="WP_001060078.1">
    <property type="nucleotide sequence ID" value="NC_011742.1"/>
</dbReference>
<dbReference type="SMR" id="B7MDN8"/>
<dbReference type="ESTHER" id="ecoli-bioh">
    <property type="family name" value="BioH"/>
</dbReference>
<dbReference type="MEROPS" id="S33.994"/>
<dbReference type="KEGG" id="ecz:ECS88_3799"/>
<dbReference type="HOGENOM" id="CLU_020336_12_2_6"/>
<dbReference type="UniPathway" id="UPA00078"/>
<dbReference type="Proteomes" id="UP000000747">
    <property type="component" value="Chromosome"/>
</dbReference>
<dbReference type="GO" id="GO:0005737">
    <property type="term" value="C:cytoplasm"/>
    <property type="evidence" value="ECO:0007669"/>
    <property type="project" value="UniProtKB-SubCell"/>
</dbReference>
<dbReference type="GO" id="GO:0090499">
    <property type="term" value="F:pimelyl-[acyl-carrier protein] methyl ester esterase activity"/>
    <property type="evidence" value="ECO:0007669"/>
    <property type="project" value="UniProtKB-EC"/>
</dbReference>
<dbReference type="GO" id="GO:0009102">
    <property type="term" value="P:biotin biosynthetic process"/>
    <property type="evidence" value="ECO:0007669"/>
    <property type="project" value="UniProtKB-UniRule"/>
</dbReference>
<dbReference type="FunFam" id="3.40.50.1820:FF:000045">
    <property type="entry name" value="Pimeloyl-[acyl-carrier protein] methyl ester esterase"/>
    <property type="match status" value="1"/>
</dbReference>
<dbReference type="Gene3D" id="3.40.50.1820">
    <property type="entry name" value="alpha/beta hydrolase"/>
    <property type="match status" value="1"/>
</dbReference>
<dbReference type="HAMAP" id="MF_01260">
    <property type="entry name" value="Carboxylester"/>
    <property type="match status" value="1"/>
</dbReference>
<dbReference type="InterPro" id="IPR000073">
    <property type="entry name" value="AB_hydrolase_1"/>
</dbReference>
<dbReference type="InterPro" id="IPR029058">
    <property type="entry name" value="AB_hydrolase_fold"/>
</dbReference>
<dbReference type="InterPro" id="IPR010076">
    <property type="entry name" value="BioH"/>
</dbReference>
<dbReference type="InterPro" id="IPR050228">
    <property type="entry name" value="Carboxylesterase_BioH"/>
</dbReference>
<dbReference type="NCBIfam" id="TIGR01738">
    <property type="entry name" value="bioH"/>
    <property type="match status" value="1"/>
</dbReference>
<dbReference type="NCBIfam" id="NF007674">
    <property type="entry name" value="PRK10349.1"/>
    <property type="match status" value="1"/>
</dbReference>
<dbReference type="PANTHER" id="PTHR43194">
    <property type="entry name" value="HYDROLASE ALPHA/BETA FOLD FAMILY"/>
    <property type="match status" value="1"/>
</dbReference>
<dbReference type="PANTHER" id="PTHR43194:SF5">
    <property type="entry name" value="PIMELOYL-[ACYL-CARRIER PROTEIN] METHYL ESTER ESTERASE"/>
    <property type="match status" value="1"/>
</dbReference>
<dbReference type="Pfam" id="PF00561">
    <property type="entry name" value="Abhydrolase_1"/>
    <property type="match status" value="1"/>
</dbReference>
<dbReference type="SUPFAM" id="SSF53474">
    <property type="entry name" value="alpha/beta-Hydrolases"/>
    <property type="match status" value="1"/>
</dbReference>
<feature type="chain" id="PRO_1000139986" description="Pimeloyl-[acyl-carrier protein] methyl ester esterase">
    <location>
        <begin position="1"/>
        <end position="256"/>
    </location>
</feature>
<feature type="domain" description="AB hydrolase-1" evidence="1">
    <location>
        <begin position="15"/>
        <end position="242"/>
    </location>
</feature>
<feature type="active site" description="Nucleophile" evidence="2">
    <location>
        <position position="82"/>
    </location>
</feature>
<feature type="active site" evidence="2">
    <location>
        <position position="207"/>
    </location>
</feature>
<feature type="active site" evidence="2">
    <location>
        <position position="235"/>
    </location>
</feature>
<feature type="binding site" evidence="2">
    <location>
        <position position="22"/>
    </location>
    <ligand>
        <name>substrate</name>
    </ligand>
</feature>
<feature type="binding site" evidence="2">
    <location>
        <begin position="82"/>
        <end position="83"/>
    </location>
    <ligand>
        <name>substrate</name>
    </ligand>
</feature>
<feature type="binding site" evidence="2">
    <location>
        <begin position="143"/>
        <end position="147"/>
    </location>
    <ligand>
        <name>substrate</name>
    </ligand>
</feature>
<feature type="binding site" evidence="2">
    <location>
        <position position="235"/>
    </location>
    <ligand>
        <name>substrate</name>
    </ligand>
</feature>
<sequence>MNNIWWQTKGQGNVHLVLLHGWGLNAEVWRCIDEELSSHFTLHLVDLPGFGRSRGFGALSLADMAEAVLRQAPDKAIWLGWSLGGLVASQIALTHPERVQALVTVASSPCFSARDEWPGIKPDVLAGFQQQLSDDFQRTVERFLALQTMGTETARQDARALKKTVLALPMPEVDVLNGGLEILKTVDLRLPLQNVSMPFLRLYGYLDGLVPRKVVPMLDKLWPHSESYIFAKAAHAPFISHPVEFHHLLVALKQRV</sequence>
<name>BIOH_ECO45</name>
<evidence type="ECO:0000255" key="1"/>
<evidence type="ECO:0000255" key="2">
    <source>
        <dbReference type="HAMAP-Rule" id="MF_01260"/>
    </source>
</evidence>
<keyword id="KW-0093">Biotin biosynthesis</keyword>
<keyword id="KW-0963">Cytoplasm</keyword>
<keyword id="KW-0378">Hydrolase</keyword>
<keyword id="KW-1185">Reference proteome</keyword>
<keyword id="KW-0719">Serine esterase</keyword>
<comment type="function">
    <text evidence="2">The physiological role of BioH is to remove the methyl group introduced by BioC when the pimeloyl moiety is complete. It allows to synthesize pimeloyl-ACP via the fatty acid synthetic pathway through the hydrolysis of the ester bonds of pimeloyl-ACP esters.</text>
</comment>
<comment type="catalytic activity">
    <reaction evidence="2">
        <text>6-carboxyhexanoyl-[ACP] methyl ester + H2O = 6-carboxyhexanoyl-[ACP] + methanol + H(+)</text>
        <dbReference type="Rhea" id="RHEA:42700"/>
        <dbReference type="Rhea" id="RHEA-COMP:9955"/>
        <dbReference type="Rhea" id="RHEA-COMP:10186"/>
        <dbReference type="ChEBI" id="CHEBI:15377"/>
        <dbReference type="ChEBI" id="CHEBI:15378"/>
        <dbReference type="ChEBI" id="CHEBI:17790"/>
        <dbReference type="ChEBI" id="CHEBI:78846"/>
        <dbReference type="ChEBI" id="CHEBI:82735"/>
        <dbReference type="EC" id="3.1.1.85"/>
    </reaction>
</comment>
<comment type="pathway">
    <text evidence="2">Cofactor biosynthesis; biotin biosynthesis.</text>
</comment>
<comment type="subunit">
    <text evidence="2">Monomer.</text>
</comment>
<comment type="subcellular location">
    <subcellularLocation>
        <location evidence="2">Cytoplasm</location>
    </subcellularLocation>
</comment>
<comment type="similarity">
    <text evidence="2">Belongs to the AB hydrolase superfamily. Carboxylesterase BioH family.</text>
</comment>
<gene>
    <name evidence="2" type="primary">bioH</name>
    <name type="ordered locus">ECS88_3799</name>
</gene>
<reference key="1">
    <citation type="journal article" date="2009" name="PLoS Genet.">
        <title>Organised genome dynamics in the Escherichia coli species results in highly diverse adaptive paths.</title>
        <authorList>
            <person name="Touchon M."/>
            <person name="Hoede C."/>
            <person name="Tenaillon O."/>
            <person name="Barbe V."/>
            <person name="Baeriswyl S."/>
            <person name="Bidet P."/>
            <person name="Bingen E."/>
            <person name="Bonacorsi S."/>
            <person name="Bouchier C."/>
            <person name="Bouvet O."/>
            <person name="Calteau A."/>
            <person name="Chiapello H."/>
            <person name="Clermont O."/>
            <person name="Cruveiller S."/>
            <person name="Danchin A."/>
            <person name="Diard M."/>
            <person name="Dossat C."/>
            <person name="Karoui M.E."/>
            <person name="Frapy E."/>
            <person name="Garry L."/>
            <person name="Ghigo J.M."/>
            <person name="Gilles A.M."/>
            <person name="Johnson J."/>
            <person name="Le Bouguenec C."/>
            <person name="Lescat M."/>
            <person name="Mangenot S."/>
            <person name="Martinez-Jehanne V."/>
            <person name="Matic I."/>
            <person name="Nassif X."/>
            <person name="Oztas S."/>
            <person name="Petit M.A."/>
            <person name="Pichon C."/>
            <person name="Rouy Z."/>
            <person name="Ruf C.S."/>
            <person name="Schneider D."/>
            <person name="Tourret J."/>
            <person name="Vacherie B."/>
            <person name="Vallenet D."/>
            <person name="Medigue C."/>
            <person name="Rocha E.P.C."/>
            <person name="Denamur E."/>
        </authorList>
    </citation>
    <scope>NUCLEOTIDE SEQUENCE [LARGE SCALE GENOMIC DNA]</scope>
    <source>
        <strain>S88 / ExPEC</strain>
    </source>
</reference>
<protein>
    <recommendedName>
        <fullName evidence="2">Pimeloyl-[acyl-carrier protein] methyl ester esterase</fullName>
        <ecNumber evidence="2">3.1.1.85</ecNumber>
    </recommendedName>
    <alternativeName>
        <fullName evidence="2">Biotin synthesis protein BioH</fullName>
    </alternativeName>
    <alternativeName>
        <fullName evidence="2">Carboxylesterase BioH</fullName>
    </alternativeName>
</protein>